<sequence>MATIFKRVRLLNEQGELIQTDIKVAGGRIVQIAHDLHAEADDEVIDVDGQFVAPGFVDVHVHLREPGGEHKETIATGTLAAAKGGFTTIAAMPNTKPVPDTKQHMEWLVNRIRETAHVRVLPYASITVRQAGKQLVDFVALKEAGAFAFTDDGVGVQSARIMYEAMQQAAALDMPIVAHCEDETLTYKGCVHDGSFAKRYGLSGIPSVCESVHIARDVLLAEATGCHYHVCHISTKQSVRIVREAKQAGIRVTAEVTPHHLLLCDEDIPTLDANFKMNPPLRTKEDQQALIEGLLDGTIDFIATDHAPHTKEEKSEGMVLAPFGIVGLETAFPLLYTHFVEKGICTLKQLVDWLSKKPAETFRIDGGELKVGAKADFVVIDLHTEQAIDPNTFVSKGKNTPFAGWTCKGWPTMTIVAGKIVWQKGRGE</sequence>
<evidence type="ECO:0000255" key="1">
    <source>
        <dbReference type="HAMAP-Rule" id="MF_00220"/>
    </source>
</evidence>
<accession>B7GFA5</accession>
<reference key="1">
    <citation type="journal article" date="2008" name="Genome Biol.">
        <title>Encapsulated in silica: genome, proteome and physiology of the thermophilic bacterium Anoxybacillus flavithermus WK1.</title>
        <authorList>
            <person name="Saw J.H."/>
            <person name="Mountain B.W."/>
            <person name="Feng L."/>
            <person name="Omelchenko M.V."/>
            <person name="Hou S."/>
            <person name="Saito J.A."/>
            <person name="Stott M.B."/>
            <person name="Li D."/>
            <person name="Zhao G."/>
            <person name="Wu J."/>
            <person name="Galperin M.Y."/>
            <person name="Koonin E.V."/>
            <person name="Makarova K.S."/>
            <person name="Wolf Y.I."/>
            <person name="Rigden D.J."/>
            <person name="Dunfield P.F."/>
            <person name="Wang L."/>
            <person name="Alam M."/>
        </authorList>
    </citation>
    <scope>NUCLEOTIDE SEQUENCE [LARGE SCALE GENOMIC DNA]</scope>
    <source>
        <strain>DSM 21510 / WK1</strain>
    </source>
</reference>
<organism>
    <name type="scientific">Anoxybacillus flavithermus (strain DSM 21510 / WK1)</name>
    <dbReference type="NCBI Taxonomy" id="491915"/>
    <lineage>
        <taxon>Bacteria</taxon>
        <taxon>Bacillati</taxon>
        <taxon>Bacillota</taxon>
        <taxon>Bacilli</taxon>
        <taxon>Bacillales</taxon>
        <taxon>Anoxybacillaceae</taxon>
        <taxon>Anoxybacillus</taxon>
    </lineage>
</organism>
<protein>
    <recommendedName>
        <fullName evidence="1">Dihydroorotase</fullName>
        <shortName evidence="1">DHOase</shortName>
        <ecNumber evidence="1">3.5.2.3</ecNumber>
    </recommendedName>
</protein>
<keyword id="KW-0378">Hydrolase</keyword>
<keyword id="KW-0479">Metal-binding</keyword>
<keyword id="KW-0665">Pyrimidine biosynthesis</keyword>
<keyword id="KW-0862">Zinc</keyword>
<dbReference type="EC" id="3.5.2.3" evidence="1"/>
<dbReference type="EMBL" id="CP000922">
    <property type="protein sequence ID" value="ACJ34166.1"/>
    <property type="molecule type" value="Genomic_DNA"/>
</dbReference>
<dbReference type="RefSeq" id="WP_012575365.1">
    <property type="nucleotide sequence ID" value="NC_011567.1"/>
</dbReference>
<dbReference type="SMR" id="B7GFA5"/>
<dbReference type="STRING" id="491915.Aflv_1805"/>
<dbReference type="GeneID" id="7038058"/>
<dbReference type="KEGG" id="afl:Aflv_1805"/>
<dbReference type="PATRIC" id="fig|491915.6.peg.1856"/>
<dbReference type="eggNOG" id="COG0044">
    <property type="taxonomic scope" value="Bacteria"/>
</dbReference>
<dbReference type="HOGENOM" id="CLU_015572_1_0_9"/>
<dbReference type="UniPathway" id="UPA00070">
    <property type="reaction ID" value="UER00117"/>
</dbReference>
<dbReference type="Proteomes" id="UP000000742">
    <property type="component" value="Chromosome"/>
</dbReference>
<dbReference type="GO" id="GO:0005737">
    <property type="term" value="C:cytoplasm"/>
    <property type="evidence" value="ECO:0007669"/>
    <property type="project" value="TreeGrafter"/>
</dbReference>
<dbReference type="GO" id="GO:0004038">
    <property type="term" value="F:allantoinase activity"/>
    <property type="evidence" value="ECO:0007669"/>
    <property type="project" value="TreeGrafter"/>
</dbReference>
<dbReference type="GO" id="GO:0004151">
    <property type="term" value="F:dihydroorotase activity"/>
    <property type="evidence" value="ECO:0007669"/>
    <property type="project" value="UniProtKB-UniRule"/>
</dbReference>
<dbReference type="GO" id="GO:0008270">
    <property type="term" value="F:zinc ion binding"/>
    <property type="evidence" value="ECO:0007669"/>
    <property type="project" value="UniProtKB-UniRule"/>
</dbReference>
<dbReference type="GO" id="GO:0044205">
    <property type="term" value="P:'de novo' UMP biosynthetic process"/>
    <property type="evidence" value="ECO:0007669"/>
    <property type="project" value="UniProtKB-UniRule"/>
</dbReference>
<dbReference type="GO" id="GO:0006145">
    <property type="term" value="P:purine nucleobase catabolic process"/>
    <property type="evidence" value="ECO:0007669"/>
    <property type="project" value="TreeGrafter"/>
</dbReference>
<dbReference type="CDD" id="cd01317">
    <property type="entry name" value="DHOase_IIa"/>
    <property type="match status" value="1"/>
</dbReference>
<dbReference type="Gene3D" id="3.20.20.140">
    <property type="entry name" value="Metal-dependent hydrolases"/>
    <property type="match status" value="1"/>
</dbReference>
<dbReference type="Gene3D" id="2.30.40.10">
    <property type="entry name" value="Urease, subunit C, domain 1"/>
    <property type="match status" value="1"/>
</dbReference>
<dbReference type="HAMAP" id="MF_00220_B">
    <property type="entry name" value="PyrC_classI_B"/>
    <property type="match status" value="1"/>
</dbReference>
<dbReference type="InterPro" id="IPR006680">
    <property type="entry name" value="Amidohydro-rel"/>
</dbReference>
<dbReference type="InterPro" id="IPR004722">
    <property type="entry name" value="DHOase"/>
</dbReference>
<dbReference type="InterPro" id="IPR050138">
    <property type="entry name" value="DHOase/Allantoinase_Hydrolase"/>
</dbReference>
<dbReference type="InterPro" id="IPR002195">
    <property type="entry name" value="Dihydroorotase_CS"/>
</dbReference>
<dbReference type="InterPro" id="IPR011059">
    <property type="entry name" value="Metal-dep_hydrolase_composite"/>
</dbReference>
<dbReference type="InterPro" id="IPR032466">
    <property type="entry name" value="Metal_Hydrolase"/>
</dbReference>
<dbReference type="NCBIfam" id="NF006837">
    <property type="entry name" value="PRK09357.1-2"/>
    <property type="match status" value="1"/>
</dbReference>
<dbReference type="NCBIfam" id="TIGR00857">
    <property type="entry name" value="pyrC_multi"/>
    <property type="match status" value="1"/>
</dbReference>
<dbReference type="PANTHER" id="PTHR43668">
    <property type="entry name" value="ALLANTOINASE"/>
    <property type="match status" value="1"/>
</dbReference>
<dbReference type="PANTHER" id="PTHR43668:SF2">
    <property type="entry name" value="ALLANTOINASE"/>
    <property type="match status" value="1"/>
</dbReference>
<dbReference type="Pfam" id="PF01979">
    <property type="entry name" value="Amidohydro_1"/>
    <property type="match status" value="1"/>
</dbReference>
<dbReference type="SUPFAM" id="SSF51338">
    <property type="entry name" value="Composite domain of metallo-dependent hydrolases"/>
    <property type="match status" value="1"/>
</dbReference>
<dbReference type="SUPFAM" id="SSF51556">
    <property type="entry name" value="Metallo-dependent hydrolases"/>
    <property type="match status" value="1"/>
</dbReference>
<dbReference type="PROSITE" id="PS00482">
    <property type="entry name" value="DIHYDROOROTASE_1"/>
    <property type="match status" value="1"/>
</dbReference>
<dbReference type="PROSITE" id="PS00483">
    <property type="entry name" value="DIHYDROOROTASE_2"/>
    <property type="match status" value="1"/>
</dbReference>
<gene>
    <name evidence="1" type="primary">pyrC</name>
    <name type="ordered locus">Aflv_1805</name>
</gene>
<proteinExistence type="inferred from homology"/>
<comment type="function">
    <text evidence="1">Catalyzes the reversible cyclization of carbamoyl aspartate to dihydroorotate.</text>
</comment>
<comment type="catalytic activity">
    <reaction evidence="1">
        <text>(S)-dihydroorotate + H2O = N-carbamoyl-L-aspartate + H(+)</text>
        <dbReference type="Rhea" id="RHEA:24296"/>
        <dbReference type="ChEBI" id="CHEBI:15377"/>
        <dbReference type="ChEBI" id="CHEBI:15378"/>
        <dbReference type="ChEBI" id="CHEBI:30864"/>
        <dbReference type="ChEBI" id="CHEBI:32814"/>
        <dbReference type="EC" id="3.5.2.3"/>
    </reaction>
</comment>
<comment type="cofactor">
    <cofactor evidence="1">
        <name>Zn(2+)</name>
        <dbReference type="ChEBI" id="CHEBI:29105"/>
    </cofactor>
    <text evidence="1">Binds 2 Zn(2+) ions per subunit.</text>
</comment>
<comment type="pathway">
    <text evidence="1">Pyrimidine metabolism; UMP biosynthesis via de novo pathway; (S)-dihydroorotate from bicarbonate: step 3/3.</text>
</comment>
<comment type="similarity">
    <text evidence="1">Belongs to the metallo-dependent hydrolases superfamily. DHOase family. Class I DHOase subfamily.</text>
</comment>
<feature type="chain" id="PRO_1000193087" description="Dihydroorotase">
    <location>
        <begin position="1"/>
        <end position="428"/>
    </location>
</feature>
<feature type="active site" evidence="1">
    <location>
        <position position="305"/>
    </location>
</feature>
<feature type="binding site" evidence="1">
    <location>
        <position position="60"/>
    </location>
    <ligand>
        <name>Zn(2+)</name>
        <dbReference type="ChEBI" id="CHEBI:29105"/>
        <label>1</label>
    </ligand>
</feature>
<feature type="binding site" evidence="1">
    <location>
        <begin position="62"/>
        <end position="64"/>
    </location>
    <ligand>
        <name>substrate</name>
    </ligand>
</feature>
<feature type="binding site" evidence="1">
    <location>
        <position position="62"/>
    </location>
    <ligand>
        <name>Zn(2+)</name>
        <dbReference type="ChEBI" id="CHEBI:29105"/>
        <label>1</label>
    </ligand>
</feature>
<feature type="binding site" evidence="1">
    <location>
        <position position="94"/>
    </location>
    <ligand>
        <name>substrate</name>
    </ligand>
</feature>
<feature type="binding site" evidence="1">
    <location>
        <position position="152"/>
    </location>
    <ligand>
        <name>Zn(2+)</name>
        <dbReference type="ChEBI" id="CHEBI:29105"/>
        <label>1</label>
    </ligand>
</feature>
<feature type="binding site" evidence="1">
    <location>
        <position position="152"/>
    </location>
    <ligand>
        <name>Zn(2+)</name>
        <dbReference type="ChEBI" id="CHEBI:29105"/>
        <label>2</label>
    </ligand>
</feature>
<feature type="binding site" evidence="1">
    <location>
        <position position="179"/>
    </location>
    <ligand>
        <name>Zn(2+)</name>
        <dbReference type="ChEBI" id="CHEBI:29105"/>
        <label>2</label>
    </ligand>
</feature>
<feature type="binding site" evidence="1">
    <location>
        <position position="232"/>
    </location>
    <ligand>
        <name>Zn(2+)</name>
        <dbReference type="ChEBI" id="CHEBI:29105"/>
        <label>2</label>
    </ligand>
</feature>
<feature type="binding site" evidence="1">
    <location>
        <position position="278"/>
    </location>
    <ligand>
        <name>substrate</name>
    </ligand>
</feature>
<feature type="binding site" evidence="1">
    <location>
        <position position="305"/>
    </location>
    <ligand>
        <name>Zn(2+)</name>
        <dbReference type="ChEBI" id="CHEBI:29105"/>
        <label>1</label>
    </ligand>
</feature>
<feature type="binding site" evidence="1">
    <location>
        <position position="309"/>
    </location>
    <ligand>
        <name>substrate</name>
    </ligand>
</feature>
<feature type="binding site" evidence="1">
    <location>
        <begin position="323"/>
        <end position="324"/>
    </location>
    <ligand>
        <name>substrate</name>
    </ligand>
</feature>
<name>PYRC_ANOFW</name>